<protein>
    <recommendedName>
        <fullName evidence="2">Cyanuric acid amidohydrolase</fullName>
        <shortName evidence="2">CAH</shortName>
        <ecNumber evidence="2 3">3.5.2.15</ecNumber>
    </recommendedName>
</protein>
<gene>
    <name type="ordered locus">M446_3816</name>
</gene>
<feature type="chain" id="PRO_0000439914" description="Cyanuric acid amidohydrolase">
    <location>
        <begin position="1"/>
        <end position="369"/>
    </location>
</feature>
<feature type="region of interest" description="RU A" evidence="2">
    <location>
        <begin position="1"/>
        <end position="100"/>
    </location>
</feature>
<feature type="region of interest" description="RU B" evidence="2">
    <location>
        <begin position="106"/>
        <end position="242"/>
    </location>
</feature>
<feature type="region of interest" description="RU C" evidence="2">
    <location>
        <begin position="248"/>
        <end position="369"/>
    </location>
</feature>
<feature type="active site" evidence="2">
    <location>
        <position position="155"/>
    </location>
</feature>
<feature type="active site" description="Nucleophile" evidence="2">
    <location>
        <position position="225"/>
    </location>
</feature>
<feature type="binding site" evidence="2">
    <location>
        <position position="53"/>
    </location>
    <ligand>
        <name>substrate</name>
    </ligand>
</feature>
<feature type="binding site" evidence="2">
    <location>
        <begin position="81"/>
        <end position="82"/>
    </location>
    <ligand>
        <name>substrate</name>
    </ligand>
</feature>
<feature type="binding site" evidence="2">
    <location>
        <position position="187"/>
    </location>
    <ligand>
        <name>substrate</name>
    </ligand>
</feature>
<feature type="binding site" evidence="2">
    <location>
        <begin position="225"/>
        <end position="226"/>
    </location>
    <ligand>
        <name>substrate</name>
    </ligand>
</feature>
<feature type="binding site" evidence="2">
    <location>
        <position position="296"/>
    </location>
    <ligand>
        <name>Mg(2+)</name>
        <dbReference type="ChEBI" id="CHEBI:18420"/>
        <note>structural</note>
    </ligand>
</feature>
<feature type="binding site" evidence="2">
    <location>
        <position position="323"/>
    </location>
    <ligand>
        <name>substrate</name>
    </ligand>
</feature>
<feature type="binding site" evidence="2">
    <location>
        <begin position="342"/>
        <end position="343"/>
    </location>
    <ligand>
        <name>substrate</name>
    </ligand>
</feature>
<feature type="binding site" evidence="2">
    <location>
        <position position="345"/>
    </location>
    <ligand>
        <name>Mg(2+)</name>
        <dbReference type="ChEBI" id="CHEBI:18420"/>
        <note>structural</note>
    </ligand>
</feature>
<feature type="binding site" evidence="2">
    <location>
        <position position="348"/>
    </location>
    <ligand>
        <name>Mg(2+)</name>
        <dbReference type="ChEBI" id="CHEBI:18420"/>
        <note>structural</note>
    </ligand>
</feature>
<feature type="binding site" evidence="2">
    <location>
        <position position="349"/>
    </location>
    <ligand>
        <name>Mg(2+)</name>
        <dbReference type="ChEBI" id="CHEBI:18420"/>
        <note>structural</note>
    </ligand>
</feature>
<feature type="binding site" evidence="2">
    <location>
        <position position="350"/>
    </location>
    <ligand>
        <name>Mg(2+)</name>
        <dbReference type="ChEBI" id="CHEBI:18420"/>
        <note>structural</note>
    </ligand>
</feature>
<feature type="binding site" evidence="2">
    <location>
        <position position="353"/>
    </location>
    <ligand>
        <name>Mg(2+)</name>
        <dbReference type="ChEBI" id="CHEBI:18420"/>
        <note>structural</note>
    </ligand>
</feature>
<feature type="site" description="Important for substrate specificity" evidence="2">
    <location>
        <position position="319"/>
    </location>
</feature>
<proteinExistence type="evidence at protein level"/>
<dbReference type="EC" id="3.5.2.15" evidence="2 3"/>
<dbReference type="EMBL" id="CP000943">
    <property type="protein sequence ID" value="ACA18193.1"/>
    <property type="molecule type" value="Genomic_DNA"/>
</dbReference>
<dbReference type="RefSeq" id="WP_012333591.1">
    <property type="nucleotide sequence ID" value="NC_010511.1"/>
</dbReference>
<dbReference type="SMR" id="B0UET5"/>
<dbReference type="STRING" id="426117.M446_3816"/>
<dbReference type="KEGG" id="met:M446_3816"/>
<dbReference type="eggNOG" id="ENOG502Z8BS">
    <property type="taxonomic scope" value="Bacteria"/>
</dbReference>
<dbReference type="HOGENOM" id="CLU_808206_0_0_5"/>
<dbReference type="SABIO-RK" id="B0UET5"/>
<dbReference type="UniPathway" id="UPA00008">
    <property type="reaction ID" value="UER00502"/>
</dbReference>
<dbReference type="GO" id="GO:0018753">
    <property type="term" value="F:cyanuric acid amidohydrolase activity"/>
    <property type="evidence" value="ECO:0007669"/>
    <property type="project" value="UniProtKB-UniRule"/>
</dbReference>
<dbReference type="GO" id="GO:0046872">
    <property type="term" value="F:metal ion binding"/>
    <property type="evidence" value="ECO:0007669"/>
    <property type="project" value="UniProtKB-UniRule"/>
</dbReference>
<dbReference type="GO" id="GO:0019381">
    <property type="term" value="P:atrazine catabolic process"/>
    <property type="evidence" value="ECO:0007669"/>
    <property type="project" value="UniProtKB-UniRule"/>
</dbReference>
<dbReference type="Gene3D" id="3.30.1330.160">
    <property type="entry name" value="Cyanuric acid hydrolase/Barbituras, RU C"/>
    <property type="match status" value="1"/>
</dbReference>
<dbReference type="Gene3D" id="3.30.1330.170">
    <property type="entry name" value="Cyanuric acid hydrolase/Barbiturase, RU A"/>
    <property type="match status" value="1"/>
</dbReference>
<dbReference type="Gene3D" id="3.30.1330.180">
    <property type="entry name" value="Cyanuric acid hydrolase/Barbiturase, RU B"/>
    <property type="match status" value="1"/>
</dbReference>
<dbReference type="HAMAP" id="MF_01989">
    <property type="entry name" value="Cyc_amidohydrol"/>
    <property type="match status" value="1"/>
</dbReference>
<dbReference type="InterPro" id="IPR014086">
    <property type="entry name" value="AtzD/Barbiturase"/>
</dbReference>
<dbReference type="InterPro" id="IPR043008">
    <property type="entry name" value="AtzD/Barbiturase_RUA"/>
</dbReference>
<dbReference type="InterPro" id="IPR043006">
    <property type="entry name" value="AtzD/Barbiturase_RUB"/>
</dbReference>
<dbReference type="InterPro" id="IPR043007">
    <property type="entry name" value="AtzD/Barbiturase_RUC"/>
</dbReference>
<dbReference type="NCBIfam" id="TIGR02714">
    <property type="entry name" value="amido_AtzD_TrzD"/>
    <property type="match status" value="1"/>
</dbReference>
<dbReference type="Pfam" id="PF09663">
    <property type="entry name" value="Amido_AtzD_TrzD"/>
    <property type="match status" value="1"/>
</dbReference>
<evidence type="ECO:0000250" key="1">
    <source>
        <dbReference type="UniProtKB" id="P58329"/>
    </source>
</evidence>
<evidence type="ECO:0000255" key="2">
    <source>
        <dbReference type="HAMAP-Rule" id="MF_01989"/>
    </source>
</evidence>
<evidence type="ECO:0000269" key="3">
    <source>
    </source>
</evidence>
<evidence type="ECO:0000305" key="4"/>
<keyword id="KW-0378">Hydrolase</keyword>
<keyword id="KW-0460">Magnesium</keyword>
<keyword id="KW-0479">Metal-binding</keyword>
<reference key="1">
    <citation type="submission" date="2008-02" db="EMBL/GenBank/DDBJ databases">
        <title>Complete sequence of chromosome of Methylobacterium sp. 4-46.</title>
        <authorList>
            <consortium name="US DOE Joint Genome Institute"/>
            <person name="Copeland A."/>
            <person name="Lucas S."/>
            <person name="Lapidus A."/>
            <person name="Glavina del Rio T."/>
            <person name="Dalin E."/>
            <person name="Tice H."/>
            <person name="Bruce D."/>
            <person name="Goodwin L."/>
            <person name="Pitluck S."/>
            <person name="Chertkov O."/>
            <person name="Brettin T."/>
            <person name="Detter J.C."/>
            <person name="Han C."/>
            <person name="Kuske C.R."/>
            <person name="Schmutz J."/>
            <person name="Larimer F."/>
            <person name="Land M."/>
            <person name="Hauser L."/>
            <person name="Kyrpides N."/>
            <person name="Ivanova N."/>
            <person name="Marx C.J."/>
            <person name="Richardson P."/>
        </authorList>
    </citation>
    <scope>NUCLEOTIDE SEQUENCE [LARGE SCALE GENOMIC DNA]</scope>
    <source>
        <strain>4-46</strain>
    </source>
</reference>
<reference key="2">
    <citation type="journal article" date="2012" name="J. Bacteriol.">
        <title>Defining sequence space and reaction products within the cyanuric acid hydrolase (AtzD)/barbiturase protein family.</title>
        <authorList>
            <person name="Seffernick J.L."/>
            <person name="Erickson J.S."/>
            <person name="Cameron S.M."/>
            <person name="Cho S."/>
            <person name="Dodge A.G."/>
            <person name="Richman J.E."/>
            <person name="Sadowsky M.J."/>
            <person name="Wackett L.P."/>
        </authorList>
    </citation>
    <scope>FUNCTION</scope>
    <scope>CATALYTIC ACTIVITY</scope>
    <scope>BIOPHYSICOCHEMICAL PROPERTIES</scope>
</reference>
<comment type="function">
    <text evidence="2 3">Responsible for the hydrolysis of cyanuric acid, an intermediate formed during catabolism of s-triazine based compounds in herbicides such as atrazine and polymers such as melamine. Catalyzes the hydrolytic opening of the s-triazine ring of cyanuric acid (2,4,6-trihydroxy-s-triazine) to yield carbon dioxide and carboxybiuret, which spontaneously decarboxylates to biuret.</text>
</comment>
<comment type="catalytic activity">
    <reaction evidence="2 3">
        <text>cyanurate + H2O = 1-carboxybiuret + H(+)</text>
        <dbReference type="Rhea" id="RHEA:70363"/>
        <dbReference type="ChEBI" id="CHEBI:15377"/>
        <dbReference type="ChEBI" id="CHEBI:15378"/>
        <dbReference type="ChEBI" id="CHEBI:38028"/>
        <dbReference type="ChEBI" id="CHEBI:142864"/>
        <dbReference type="EC" id="3.5.2.15"/>
    </reaction>
</comment>
<comment type="activity regulation">
    <text evidence="1 2">Inhibited by barbituric acid.</text>
</comment>
<comment type="biophysicochemical properties">
    <kinetics>
        <KM evidence="3">69 uM for cyanuric acid</KM>
        <text evidence="3">kcat is 17 sec(-1) with cyanuric acid as substrate.</text>
    </kinetics>
</comment>
<comment type="pathway">
    <text evidence="2">Xenobiotic degradation; atrazine degradation; biuret from cyanurate: step 1/1.</text>
</comment>
<comment type="subunit">
    <text evidence="1 2">Homotetramer.</text>
</comment>
<comment type="domain">
    <text evidence="2">The monomer structure is formed from three repeating units (RUs) that share the same structure as one another. The monomer, the active site and substrate all possess threefold rotational symmetry, to the extent that the active site possesses three potential Ser-Lys catalytic dyads. It is possible that any or all of the three active-site serines may act as nucleophile (albeit only one can do so per catalytic cycle).</text>
</comment>
<comment type="similarity">
    <text evidence="2 4">Belongs to the cyclic amide hydrolase (CyAH) family.</text>
</comment>
<name>CAH_METS4</name>
<sequence length="369" mass="37174">MPRRAEILRLPMAAPDDVSAIAASLRDGRLDPGDVVAVFAKTEGNGCVNDFTRPLAVQALRGLFGPLIGEAALGRIAMVMSGGTEGGLSPHWLVIAAREAAGPGPALAVGQARTPPLAAEDLGRRAQVEMVAAGVRAAMREAGLDAGQVHYVQVKCPLLTSERIGAALARGAAPATRDTLKSMGLSRAAAALGAALALGEVPAAAIGETVAETDPGRHARRCGASAGVELLDHEVVVMGMSPDWTGPLVIDHAVMADAIDLRPVAACLGRLGLLGPDGFVDEAGRARLAALLAKAEASADGAIRGRRHTMLTDSDIAPTRHARGFVAGALAGLVGATDLFVSGGAEFQGPDGGGPVAVIARRSGAAGPA</sequence>
<accession>B0UET5</accession>
<organism>
    <name type="scientific">Methylobacterium sp. (strain 4-46)</name>
    <dbReference type="NCBI Taxonomy" id="426117"/>
    <lineage>
        <taxon>Bacteria</taxon>
        <taxon>Pseudomonadati</taxon>
        <taxon>Pseudomonadota</taxon>
        <taxon>Alphaproteobacteria</taxon>
        <taxon>Hyphomicrobiales</taxon>
        <taxon>Methylobacteriaceae</taxon>
        <taxon>Methylobacterium</taxon>
    </lineage>
</organism>